<evidence type="ECO:0000250" key="1"/>
<evidence type="ECO:0000305" key="2"/>
<accession>Q8L803</accession>
<keyword id="KW-0150">Chloroplast</keyword>
<keyword id="KW-0934">Plastid</keyword>
<keyword id="KW-1185">Reference proteome</keyword>
<keyword id="KW-0687">Ribonucleoprotein</keyword>
<keyword id="KW-0689">Ribosomal protein</keyword>
<keyword id="KW-0694">RNA-binding</keyword>
<keyword id="KW-0699">rRNA-binding</keyword>
<keyword id="KW-0809">Transit peptide</keyword>
<proteinExistence type="evidence at transcript level"/>
<name>RK9_WHEAT</name>
<sequence>MASPSCASTLPWTAAAFSYPRRLQTRRAPSLVIVAQGRVKKYRQVILKDDIDEISGKKGDTMKVRAGFYRNFLLPKGKATLLTPDVLKEMQLEQERIEAEKKRVKEEAQQLARVFETIGAFKVPRKGGKGKQIFGSVTAQDLVDIIKSQLNRDVDKRLVEVPEIREVGEYVAEIKLHPDVTAKVRLTVYTK</sequence>
<gene>
    <name type="primary">RPL9</name>
</gene>
<protein>
    <recommendedName>
        <fullName evidence="2">Large ribosomal subunit protein bL9c</fullName>
    </recommendedName>
    <alternativeName>
        <fullName>50S ribosomal protein L9, chloroplastic</fullName>
    </alternativeName>
    <alternativeName>
        <fullName>CL9</fullName>
    </alternativeName>
</protein>
<reference key="1">
    <citation type="submission" date="2002-06" db="EMBL/GenBank/DDBJ databases">
        <title>Triticum aestivum putative plastid ribosomal protein CL9 gene.</title>
        <authorList>
            <person name="Lu Z.-X."/>
            <person name="Laroche A."/>
            <person name="Gaudet D."/>
        </authorList>
    </citation>
    <scope>NUCLEOTIDE SEQUENCE [MRNA]</scope>
</reference>
<dbReference type="EMBL" id="AY123421">
    <property type="protein sequence ID" value="AAM92711.1"/>
    <property type="molecule type" value="mRNA"/>
</dbReference>
<dbReference type="SMR" id="Q8L803"/>
<dbReference type="STRING" id="4565.Q8L803"/>
<dbReference type="PaxDb" id="4565-Traes_6BL_22DCB4C2A.1"/>
<dbReference type="eggNOG" id="KOG4607">
    <property type="taxonomic scope" value="Eukaryota"/>
</dbReference>
<dbReference type="Proteomes" id="UP000019116">
    <property type="component" value="Unplaced"/>
</dbReference>
<dbReference type="ExpressionAtlas" id="Q8L803">
    <property type="expression patterns" value="baseline and differential"/>
</dbReference>
<dbReference type="GO" id="GO:0009507">
    <property type="term" value="C:chloroplast"/>
    <property type="evidence" value="ECO:0007669"/>
    <property type="project" value="UniProtKB-SubCell"/>
</dbReference>
<dbReference type="GO" id="GO:0005739">
    <property type="term" value="C:mitochondrion"/>
    <property type="evidence" value="ECO:0000318"/>
    <property type="project" value="GO_Central"/>
</dbReference>
<dbReference type="GO" id="GO:1990904">
    <property type="term" value="C:ribonucleoprotein complex"/>
    <property type="evidence" value="ECO:0007669"/>
    <property type="project" value="UniProtKB-KW"/>
</dbReference>
<dbReference type="GO" id="GO:0005840">
    <property type="term" value="C:ribosome"/>
    <property type="evidence" value="ECO:0007669"/>
    <property type="project" value="UniProtKB-KW"/>
</dbReference>
<dbReference type="GO" id="GO:0019843">
    <property type="term" value="F:rRNA binding"/>
    <property type="evidence" value="ECO:0007669"/>
    <property type="project" value="UniProtKB-KW"/>
</dbReference>
<dbReference type="GO" id="GO:0003735">
    <property type="term" value="F:structural constituent of ribosome"/>
    <property type="evidence" value="ECO:0007669"/>
    <property type="project" value="InterPro"/>
</dbReference>
<dbReference type="GO" id="GO:0006412">
    <property type="term" value="P:translation"/>
    <property type="evidence" value="ECO:0007669"/>
    <property type="project" value="InterPro"/>
</dbReference>
<dbReference type="FunFam" id="3.10.430.100:FF:000005">
    <property type="entry name" value="50S ribosomal protein L9"/>
    <property type="match status" value="1"/>
</dbReference>
<dbReference type="FunFam" id="3.40.5.10:FF:000006">
    <property type="entry name" value="50S ribosomal protein L9, chloroplastic"/>
    <property type="match status" value="1"/>
</dbReference>
<dbReference type="Gene3D" id="3.10.430.100">
    <property type="entry name" value="Ribosomal protein L9, C-terminal domain"/>
    <property type="match status" value="1"/>
</dbReference>
<dbReference type="Gene3D" id="3.40.5.10">
    <property type="entry name" value="Ribosomal protein L9, N-terminal domain"/>
    <property type="match status" value="1"/>
</dbReference>
<dbReference type="HAMAP" id="MF_00503">
    <property type="entry name" value="Ribosomal_bL9"/>
    <property type="match status" value="1"/>
</dbReference>
<dbReference type="InterPro" id="IPR000244">
    <property type="entry name" value="Ribosomal_bL9"/>
</dbReference>
<dbReference type="InterPro" id="IPR009027">
    <property type="entry name" value="Ribosomal_bL9/RNase_H1_N"/>
</dbReference>
<dbReference type="InterPro" id="IPR020594">
    <property type="entry name" value="Ribosomal_bL9_bac/chp"/>
</dbReference>
<dbReference type="InterPro" id="IPR020069">
    <property type="entry name" value="Ribosomal_bL9_C"/>
</dbReference>
<dbReference type="InterPro" id="IPR036791">
    <property type="entry name" value="Ribosomal_bL9_C_sf"/>
</dbReference>
<dbReference type="InterPro" id="IPR020070">
    <property type="entry name" value="Ribosomal_bL9_N"/>
</dbReference>
<dbReference type="InterPro" id="IPR036935">
    <property type="entry name" value="Ribosomal_bL9_N_sf"/>
</dbReference>
<dbReference type="NCBIfam" id="TIGR00158">
    <property type="entry name" value="L9"/>
    <property type="match status" value="1"/>
</dbReference>
<dbReference type="PANTHER" id="PTHR21368">
    <property type="entry name" value="50S RIBOSOMAL PROTEIN L9"/>
    <property type="match status" value="1"/>
</dbReference>
<dbReference type="Pfam" id="PF03948">
    <property type="entry name" value="Ribosomal_L9_C"/>
    <property type="match status" value="1"/>
</dbReference>
<dbReference type="Pfam" id="PF01281">
    <property type="entry name" value="Ribosomal_L9_N"/>
    <property type="match status" value="1"/>
</dbReference>
<dbReference type="SUPFAM" id="SSF55658">
    <property type="entry name" value="L9 N-domain-like"/>
    <property type="match status" value="1"/>
</dbReference>
<dbReference type="SUPFAM" id="SSF55653">
    <property type="entry name" value="Ribosomal protein L9 C-domain"/>
    <property type="match status" value="1"/>
</dbReference>
<dbReference type="PROSITE" id="PS00651">
    <property type="entry name" value="RIBOSOMAL_L9"/>
    <property type="match status" value="1"/>
</dbReference>
<comment type="function">
    <text evidence="1">Binds to the 23S rRNA.</text>
</comment>
<comment type="subunit">
    <text evidence="1">Part of the 50S ribosomal subunit.</text>
</comment>
<comment type="subcellular location">
    <subcellularLocation>
        <location>Plastid</location>
        <location>Chloroplast</location>
    </subcellularLocation>
</comment>
<comment type="similarity">
    <text evidence="2">Belongs to the bacterial ribosomal protein bL9 family.</text>
</comment>
<feature type="transit peptide" description="Chloroplast" evidence="1">
    <location>
        <begin position="1"/>
        <end position="35"/>
    </location>
</feature>
<feature type="chain" id="PRO_0000249862" description="Large ribosomal subunit protein bL9c">
    <location>
        <begin position="36"/>
        <end position="191"/>
    </location>
</feature>
<organism>
    <name type="scientific">Triticum aestivum</name>
    <name type="common">Wheat</name>
    <dbReference type="NCBI Taxonomy" id="4565"/>
    <lineage>
        <taxon>Eukaryota</taxon>
        <taxon>Viridiplantae</taxon>
        <taxon>Streptophyta</taxon>
        <taxon>Embryophyta</taxon>
        <taxon>Tracheophyta</taxon>
        <taxon>Spermatophyta</taxon>
        <taxon>Magnoliopsida</taxon>
        <taxon>Liliopsida</taxon>
        <taxon>Poales</taxon>
        <taxon>Poaceae</taxon>
        <taxon>BOP clade</taxon>
        <taxon>Pooideae</taxon>
        <taxon>Triticodae</taxon>
        <taxon>Triticeae</taxon>
        <taxon>Triticinae</taxon>
        <taxon>Triticum</taxon>
    </lineage>
</organism>